<comment type="function">
    <text evidence="1">Digests double-stranded RNA. Involved in the processing of primary rRNA transcript to yield the immediate precursors to the large and small rRNAs (23S and 16S). Processes some mRNAs, and tRNAs when they are encoded in the rRNA operon. Processes pre-crRNA and tracrRNA of type II CRISPR loci if present in the organism.</text>
</comment>
<comment type="catalytic activity">
    <reaction evidence="1">
        <text>Endonucleolytic cleavage to 5'-phosphomonoester.</text>
        <dbReference type="EC" id="3.1.26.3"/>
    </reaction>
</comment>
<comment type="cofactor">
    <cofactor evidence="1">
        <name>Mg(2+)</name>
        <dbReference type="ChEBI" id="CHEBI:18420"/>
    </cofactor>
</comment>
<comment type="subunit">
    <text evidence="1">Homodimer.</text>
</comment>
<comment type="subcellular location">
    <subcellularLocation>
        <location evidence="1">Cytoplasm</location>
    </subcellularLocation>
</comment>
<comment type="similarity">
    <text evidence="1">Belongs to the ribonuclease III family.</text>
</comment>
<sequence length="247" mass="26871">MRPDLIALQERLQHVFSDPGLLERATTHRSFSAEHNERLEFLGDSVLNLAVSSLLYQRLSALPEGELSRVRANLVRQESLYQLALRLPLAQALRLGESLSGNRQRRSRRRCADELQPDEAGSGGLQHPSILADALEALIGAVYLDAGYASAQALVQRLFQDVEISPRMQAAARDAKTALQEWLASRKMKPPQYQVVARVGAAHCPTFEVACGIPALGLTERGSAGSRQAGEQAAAAAMLATLKARNL</sequence>
<accession>A1WMW1</accession>
<reference key="1">
    <citation type="submission" date="2006-12" db="EMBL/GenBank/DDBJ databases">
        <title>Complete sequence of chromosome 1 of Verminephrobacter eiseniae EF01-2.</title>
        <authorList>
            <person name="Copeland A."/>
            <person name="Lucas S."/>
            <person name="Lapidus A."/>
            <person name="Barry K."/>
            <person name="Detter J.C."/>
            <person name="Glavina del Rio T."/>
            <person name="Dalin E."/>
            <person name="Tice H."/>
            <person name="Pitluck S."/>
            <person name="Chertkov O."/>
            <person name="Brettin T."/>
            <person name="Bruce D."/>
            <person name="Han C."/>
            <person name="Tapia R."/>
            <person name="Gilna P."/>
            <person name="Schmutz J."/>
            <person name="Larimer F."/>
            <person name="Land M."/>
            <person name="Hauser L."/>
            <person name="Kyrpides N."/>
            <person name="Kim E."/>
            <person name="Stahl D."/>
            <person name="Richardson P."/>
        </authorList>
    </citation>
    <scope>NUCLEOTIDE SEQUENCE [LARGE SCALE GENOMIC DNA]</scope>
    <source>
        <strain>EF01-2</strain>
    </source>
</reference>
<keyword id="KW-0963">Cytoplasm</keyword>
<keyword id="KW-0255">Endonuclease</keyword>
<keyword id="KW-0378">Hydrolase</keyword>
<keyword id="KW-0460">Magnesium</keyword>
<keyword id="KW-0479">Metal-binding</keyword>
<keyword id="KW-0507">mRNA processing</keyword>
<keyword id="KW-0540">Nuclease</keyword>
<keyword id="KW-1185">Reference proteome</keyword>
<keyword id="KW-0694">RNA-binding</keyword>
<keyword id="KW-0698">rRNA processing</keyword>
<keyword id="KW-0699">rRNA-binding</keyword>
<keyword id="KW-0819">tRNA processing</keyword>
<dbReference type="EC" id="3.1.26.3" evidence="1"/>
<dbReference type="EMBL" id="CP000542">
    <property type="protein sequence ID" value="ABM58968.1"/>
    <property type="molecule type" value="Genomic_DNA"/>
</dbReference>
<dbReference type="RefSeq" id="WP_011810960.1">
    <property type="nucleotide sequence ID" value="NC_008786.1"/>
</dbReference>
<dbReference type="SMR" id="A1WMW1"/>
<dbReference type="STRING" id="391735.Veis_3238"/>
<dbReference type="GeneID" id="76461688"/>
<dbReference type="KEGG" id="vei:Veis_3238"/>
<dbReference type="eggNOG" id="COG0571">
    <property type="taxonomic scope" value="Bacteria"/>
</dbReference>
<dbReference type="HOGENOM" id="CLU_000907_1_1_4"/>
<dbReference type="OrthoDB" id="9805026at2"/>
<dbReference type="Proteomes" id="UP000000374">
    <property type="component" value="Chromosome"/>
</dbReference>
<dbReference type="GO" id="GO:0005737">
    <property type="term" value="C:cytoplasm"/>
    <property type="evidence" value="ECO:0007669"/>
    <property type="project" value="UniProtKB-SubCell"/>
</dbReference>
<dbReference type="GO" id="GO:0003725">
    <property type="term" value="F:double-stranded RNA binding"/>
    <property type="evidence" value="ECO:0007669"/>
    <property type="project" value="TreeGrafter"/>
</dbReference>
<dbReference type="GO" id="GO:0046872">
    <property type="term" value="F:metal ion binding"/>
    <property type="evidence" value="ECO:0007669"/>
    <property type="project" value="UniProtKB-KW"/>
</dbReference>
<dbReference type="GO" id="GO:0004525">
    <property type="term" value="F:ribonuclease III activity"/>
    <property type="evidence" value="ECO:0007669"/>
    <property type="project" value="UniProtKB-UniRule"/>
</dbReference>
<dbReference type="GO" id="GO:0019843">
    <property type="term" value="F:rRNA binding"/>
    <property type="evidence" value="ECO:0007669"/>
    <property type="project" value="UniProtKB-KW"/>
</dbReference>
<dbReference type="GO" id="GO:0006397">
    <property type="term" value="P:mRNA processing"/>
    <property type="evidence" value="ECO:0007669"/>
    <property type="project" value="UniProtKB-UniRule"/>
</dbReference>
<dbReference type="GO" id="GO:0010468">
    <property type="term" value="P:regulation of gene expression"/>
    <property type="evidence" value="ECO:0007669"/>
    <property type="project" value="TreeGrafter"/>
</dbReference>
<dbReference type="GO" id="GO:0006364">
    <property type="term" value="P:rRNA processing"/>
    <property type="evidence" value="ECO:0007669"/>
    <property type="project" value="UniProtKB-UniRule"/>
</dbReference>
<dbReference type="GO" id="GO:0008033">
    <property type="term" value="P:tRNA processing"/>
    <property type="evidence" value="ECO:0007669"/>
    <property type="project" value="UniProtKB-KW"/>
</dbReference>
<dbReference type="CDD" id="cd10845">
    <property type="entry name" value="DSRM_RNAse_III_family"/>
    <property type="match status" value="1"/>
</dbReference>
<dbReference type="CDD" id="cd00593">
    <property type="entry name" value="RIBOc"/>
    <property type="match status" value="1"/>
</dbReference>
<dbReference type="Gene3D" id="3.30.160.20">
    <property type="match status" value="1"/>
</dbReference>
<dbReference type="Gene3D" id="1.10.1520.10">
    <property type="entry name" value="Ribonuclease III domain"/>
    <property type="match status" value="1"/>
</dbReference>
<dbReference type="HAMAP" id="MF_00104">
    <property type="entry name" value="RNase_III"/>
    <property type="match status" value="1"/>
</dbReference>
<dbReference type="InterPro" id="IPR014720">
    <property type="entry name" value="dsRBD_dom"/>
</dbReference>
<dbReference type="InterPro" id="IPR011907">
    <property type="entry name" value="RNase_III"/>
</dbReference>
<dbReference type="InterPro" id="IPR000999">
    <property type="entry name" value="RNase_III_dom"/>
</dbReference>
<dbReference type="InterPro" id="IPR036389">
    <property type="entry name" value="RNase_III_sf"/>
</dbReference>
<dbReference type="PANTHER" id="PTHR11207:SF0">
    <property type="entry name" value="RIBONUCLEASE 3"/>
    <property type="match status" value="1"/>
</dbReference>
<dbReference type="PANTHER" id="PTHR11207">
    <property type="entry name" value="RIBONUCLEASE III"/>
    <property type="match status" value="1"/>
</dbReference>
<dbReference type="Pfam" id="PF00035">
    <property type="entry name" value="dsrm"/>
    <property type="match status" value="1"/>
</dbReference>
<dbReference type="Pfam" id="PF14622">
    <property type="entry name" value="Ribonucleas_3_3"/>
    <property type="match status" value="1"/>
</dbReference>
<dbReference type="SMART" id="SM00358">
    <property type="entry name" value="DSRM"/>
    <property type="match status" value="1"/>
</dbReference>
<dbReference type="SMART" id="SM00535">
    <property type="entry name" value="RIBOc"/>
    <property type="match status" value="1"/>
</dbReference>
<dbReference type="SUPFAM" id="SSF54768">
    <property type="entry name" value="dsRNA-binding domain-like"/>
    <property type="match status" value="1"/>
</dbReference>
<dbReference type="SUPFAM" id="SSF69065">
    <property type="entry name" value="RNase III domain-like"/>
    <property type="match status" value="1"/>
</dbReference>
<dbReference type="PROSITE" id="PS50137">
    <property type="entry name" value="DS_RBD"/>
    <property type="match status" value="1"/>
</dbReference>
<dbReference type="PROSITE" id="PS00517">
    <property type="entry name" value="RNASE_3_1"/>
    <property type="match status" value="1"/>
</dbReference>
<dbReference type="PROSITE" id="PS50142">
    <property type="entry name" value="RNASE_3_2"/>
    <property type="match status" value="1"/>
</dbReference>
<protein>
    <recommendedName>
        <fullName evidence="1">Ribonuclease 3</fullName>
        <ecNumber evidence="1">3.1.26.3</ecNumber>
    </recommendedName>
    <alternativeName>
        <fullName evidence="1">Ribonuclease III</fullName>
        <shortName evidence="1">RNase III</shortName>
    </alternativeName>
</protein>
<name>RNC_VEREI</name>
<feature type="chain" id="PRO_1000075847" description="Ribonuclease 3">
    <location>
        <begin position="1"/>
        <end position="247"/>
    </location>
</feature>
<feature type="domain" description="RNase III" evidence="1">
    <location>
        <begin position="5"/>
        <end position="147"/>
    </location>
</feature>
<feature type="domain" description="DRBM" evidence="1">
    <location>
        <begin position="174"/>
        <end position="244"/>
    </location>
</feature>
<feature type="region of interest" description="Disordered" evidence="2">
    <location>
        <begin position="104"/>
        <end position="124"/>
    </location>
</feature>
<feature type="active site" evidence="1">
    <location>
        <position position="44"/>
    </location>
</feature>
<feature type="active site" evidence="1">
    <location>
        <position position="136"/>
    </location>
</feature>
<feature type="binding site" evidence="1">
    <location>
        <position position="40"/>
    </location>
    <ligand>
        <name>Mg(2+)</name>
        <dbReference type="ChEBI" id="CHEBI:18420"/>
    </ligand>
</feature>
<feature type="binding site" evidence="1">
    <location>
        <position position="133"/>
    </location>
    <ligand>
        <name>Mg(2+)</name>
        <dbReference type="ChEBI" id="CHEBI:18420"/>
    </ligand>
</feature>
<feature type="binding site" evidence="1">
    <location>
        <position position="136"/>
    </location>
    <ligand>
        <name>Mg(2+)</name>
        <dbReference type="ChEBI" id="CHEBI:18420"/>
    </ligand>
</feature>
<gene>
    <name evidence="1" type="primary">rnc</name>
    <name type="ordered locus">Veis_3238</name>
</gene>
<proteinExistence type="inferred from homology"/>
<evidence type="ECO:0000255" key="1">
    <source>
        <dbReference type="HAMAP-Rule" id="MF_00104"/>
    </source>
</evidence>
<evidence type="ECO:0000256" key="2">
    <source>
        <dbReference type="SAM" id="MobiDB-lite"/>
    </source>
</evidence>
<organism>
    <name type="scientific">Verminephrobacter eiseniae (strain EF01-2)</name>
    <dbReference type="NCBI Taxonomy" id="391735"/>
    <lineage>
        <taxon>Bacteria</taxon>
        <taxon>Pseudomonadati</taxon>
        <taxon>Pseudomonadota</taxon>
        <taxon>Betaproteobacteria</taxon>
        <taxon>Burkholderiales</taxon>
        <taxon>Comamonadaceae</taxon>
        <taxon>Verminephrobacter</taxon>
    </lineage>
</organism>